<evidence type="ECO:0000255" key="1">
    <source>
        <dbReference type="HAMAP-Rule" id="MF_01636"/>
    </source>
</evidence>
<proteinExistence type="inferred from homology"/>
<gene>
    <name evidence="1" type="primary">ubiD</name>
    <name type="ordered locus">azo3658</name>
</gene>
<reference key="1">
    <citation type="journal article" date="2006" name="Nat. Biotechnol.">
        <title>Complete genome of the mutualistic, N2-fixing grass endophyte Azoarcus sp. strain BH72.</title>
        <authorList>
            <person name="Krause A."/>
            <person name="Ramakumar A."/>
            <person name="Bartels D."/>
            <person name="Battistoni F."/>
            <person name="Bekel T."/>
            <person name="Boch J."/>
            <person name="Boehm M."/>
            <person name="Friedrich F."/>
            <person name="Hurek T."/>
            <person name="Krause L."/>
            <person name="Linke B."/>
            <person name="McHardy A.C."/>
            <person name="Sarkar A."/>
            <person name="Schneiker S."/>
            <person name="Syed A.A."/>
            <person name="Thauer R."/>
            <person name="Vorhoelter F.-J."/>
            <person name="Weidner S."/>
            <person name="Puehler A."/>
            <person name="Reinhold-Hurek B."/>
            <person name="Kaiser O."/>
            <person name="Goesmann A."/>
        </authorList>
    </citation>
    <scope>NUCLEOTIDE SEQUENCE [LARGE SCALE GENOMIC DNA]</scope>
    <source>
        <strain>BH72</strain>
    </source>
</reference>
<accession>A1KBR8</accession>
<dbReference type="EC" id="4.1.1.98" evidence="1"/>
<dbReference type="EMBL" id="AM406670">
    <property type="protein sequence ID" value="CAL96274.1"/>
    <property type="molecule type" value="Genomic_DNA"/>
</dbReference>
<dbReference type="RefSeq" id="WP_011767380.1">
    <property type="nucleotide sequence ID" value="NC_008702.1"/>
</dbReference>
<dbReference type="SMR" id="A1KBR8"/>
<dbReference type="STRING" id="62928.azo3658"/>
<dbReference type="KEGG" id="azo:azo3658"/>
<dbReference type="eggNOG" id="COG0043">
    <property type="taxonomic scope" value="Bacteria"/>
</dbReference>
<dbReference type="HOGENOM" id="CLU_023348_4_1_4"/>
<dbReference type="UniPathway" id="UPA00232"/>
<dbReference type="Proteomes" id="UP000002588">
    <property type="component" value="Chromosome"/>
</dbReference>
<dbReference type="GO" id="GO:0005829">
    <property type="term" value="C:cytosol"/>
    <property type="evidence" value="ECO:0007669"/>
    <property type="project" value="TreeGrafter"/>
</dbReference>
<dbReference type="GO" id="GO:0005886">
    <property type="term" value="C:plasma membrane"/>
    <property type="evidence" value="ECO:0007669"/>
    <property type="project" value="UniProtKB-SubCell"/>
</dbReference>
<dbReference type="GO" id="GO:0008694">
    <property type="term" value="F:3-octaprenyl-4-hydroxybenzoate carboxy-lyase activity"/>
    <property type="evidence" value="ECO:0007669"/>
    <property type="project" value="UniProtKB-UniRule"/>
</dbReference>
<dbReference type="GO" id="GO:0046872">
    <property type="term" value="F:metal ion binding"/>
    <property type="evidence" value="ECO:0007669"/>
    <property type="project" value="UniProtKB-KW"/>
</dbReference>
<dbReference type="GO" id="GO:0006744">
    <property type="term" value="P:ubiquinone biosynthetic process"/>
    <property type="evidence" value="ECO:0007669"/>
    <property type="project" value="UniProtKB-UniRule"/>
</dbReference>
<dbReference type="FunFam" id="1.20.5.570:FF:000001">
    <property type="entry name" value="3-octaprenyl-4-hydroxybenzoate carboxy-lyase"/>
    <property type="match status" value="1"/>
</dbReference>
<dbReference type="FunFam" id="3.40.1670.10:FF:000001">
    <property type="entry name" value="3-octaprenyl-4-hydroxybenzoate carboxy-lyase"/>
    <property type="match status" value="1"/>
</dbReference>
<dbReference type="Gene3D" id="1.20.5.570">
    <property type="entry name" value="Single helix bin"/>
    <property type="match status" value="1"/>
</dbReference>
<dbReference type="Gene3D" id="3.40.1670.10">
    <property type="entry name" value="UbiD C-terminal domain-like"/>
    <property type="match status" value="1"/>
</dbReference>
<dbReference type="HAMAP" id="MF_01636">
    <property type="entry name" value="UbiD"/>
    <property type="match status" value="1"/>
</dbReference>
<dbReference type="InterPro" id="IPR002830">
    <property type="entry name" value="UbiD"/>
</dbReference>
<dbReference type="InterPro" id="IPR049381">
    <property type="entry name" value="UbiD-like_C"/>
</dbReference>
<dbReference type="InterPro" id="IPR049383">
    <property type="entry name" value="UbiD-like_N"/>
</dbReference>
<dbReference type="InterPro" id="IPR023677">
    <property type="entry name" value="UbiD_bacteria"/>
</dbReference>
<dbReference type="InterPro" id="IPR048304">
    <property type="entry name" value="UbiD_Rift_dom"/>
</dbReference>
<dbReference type="NCBIfam" id="NF008175">
    <property type="entry name" value="PRK10922.1"/>
    <property type="match status" value="1"/>
</dbReference>
<dbReference type="NCBIfam" id="TIGR00148">
    <property type="entry name" value="UbiD family decarboxylase"/>
    <property type="match status" value="1"/>
</dbReference>
<dbReference type="PANTHER" id="PTHR30108">
    <property type="entry name" value="3-OCTAPRENYL-4-HYDROXYBENZOATE CARBOXY-LYASE-RELATED"/>
    <property type="match status" value="1"/>
</dbReference>
<dbReference type="PANTHER" id="PTHR30108:SF17">
    <property type="entry name" value="FERULIC ACID DECARBOXYLASE 1"/>
    <property type="match status" value="1"/>
</dbReference>
<dbReference type="Pfam" id="PF01977">
    <property type="entry name" value="UbiD"/>
    <property type="match status" value="1"/>
</dbReference>
<dbReference type="Pfam" id="PF20696">
    <property type="entry name" value="UbiD_C"/>
    <property type="match status" value="1"/>
</dbReference>
<dbReference type="Pfam" id="PF20695">
    <property type="entry name" value="UbiD_N"/>
    <property type="match status" value="1"/>
</dbReference>
<dbReference type="SUPFAM" id="SSF50475">
    <property type="entry name" value="FMN-binding split barrel"/>
    <property type="match status" value="1"/>
</dbReference>
<dbReference type="SUPFAM" id="SSF143968">
    <property type="entry name" value="UbiD C-terminal domain-like"/>
    <property type="match status" value="1"/>
</dbReference>
<protein>
    <recommendedName>
        <fullName evidence="1">3-octaprenyl-4-hydroxybenzoate carboxy-lyase</fullName>
        <ecNumber evidence="1">4.1.1.98</ecNumber>
    </recommendedName>
    <alternativeName>
        <fullName evidence="1">Polyprenyl p-hydroxybenzoate decarboxylase</fullName>
    </alternativeName>
</protein>
<name>UBID_AZOSB</name>
<feature type="chain" id="PRO_1000069843" description="3-octaprenyl-4-hydroxybenzoate carboxy-lyase">
    <location>
        <begin position="1"/>
        <end position="496"/>
    </location>
</feature>
<feature type="active site" description="Proton donor" evidence="1">
    <location>
        <position position="296"/>
    </location>
</feature>
<feature type="binding site" evidence="1">
    <location>
        <position position="181"/>
    </location>
    <ligand>
        <name>Mn(2+)</name>
        <dbReference type="ChEBI" id="CHEBI:29035"/>
    </ligand>
</feature>
<feature type="binding site" evidence="1">
    <location>
        <begin position="184"/>
        <end position="186"/>
    </location>
    <ligand>
        <name>prenylated FMN</name>
        <dbReference type="ChEBI" id="CHEBI:87746"/>
    </ligand>
</feature>
<feature type="binding site" evidence="1">
    <location>
        <begin position="198"/>
        <end position="200"/>
    </location>
    <ligand>
        <name>prenylated FMN</name>
        <dbReference type="ChEBI" id="CHEBI:87746"/>
    </ligand>
</feature>
<feature type="binding site" evidence="1">
    <location>
        <begin position="203"/>
        <end position="204"/>
    </location>
    <ligand>
        <name>prenylated FMN</name>
        <dbReference type="ChEBI" id="CHEBI:87746"/>
    </ligand>
</feature>
<feature type="binding site" evidence="1">
    <location>
        <position position="247"/>
    </location>
    <ligand>
        <name>Mn(2+)</name>
        <dbReference type="ChEBI" id="CHEBI:29035"/>
    </ligand>
</feature>
<organism>
    <name type="scientific">Azoarcus sp. (strain BH72)</name>
    <dbReference type="NCBI Taxonomy" id="418699"/>
    <lineage>
        <taxon>Bacteria</taxon>
        <taxon>Pseudomonadati</taxon>
        <taxon>Pseudomonadota</taxon>
        <taxon>Betaproteobacteria</taxon>
        <taxon>Rhodocyclales</taxon>
        <taxon>Zoogloeaceae</taxon>
        <taxon>Azoarcus</taxon>
    </lineage>
</organism>
<keyword id="KW-1003">Cell membrane</keyword>
<keyword id="KW-0210">Decarboxylase</keyword>
<keyword id="KW-0285">Flavoprotein</keyword>
<keyword id="KW-0288">FMN</keyword>
<keyword id="KW-0456">Lyase</keyword>
<keyword id="KW-0464">Manganese</keyword>
<keyword id="KW-0472">Membrane</keyword>
<keyword id="KW-0479">Metal-binding</keyword>
<keyword id="KW-1185">Reference proteome</keyword>
<keyword id="KW-0831">Ubiquinone biosynthesis</keyword>
<sequence length="496" mass="55554">MKYEDLRDFIAQLEARGELKRIAAPVDTHLEMTEIADRVLRAGGPALLFEKPVTKGVPQAIPVLANLFGTPQRVAMGMGEDVADGDWSTPLREVGRLLSFLKEPEPPKGLKDAWEKWPVLKQVLNMAPREVRSAPCQQVVWEGDQVDLGKLPIQHCWPGDAAPLITWGLVVTRGPHKKRQNLGIYRQQVIGRNRVIMRWLAHRGGALDFREHQQAHPGEPFPVTVVLGCDPATILGAVTPVPDTISEYQFAGLLRGAKTELVKCLGSDLQVPASSEIVLEGVIHADDMAPEGPYGDHTGYYNEVADFPVFTIERITMRRDPIYHSTYTGKPPDEPAMLGLALNEVFVPLLQKQFPEITDFYLPPEGCSYRLAVVSMKKQYPGHAKRVMFGIWSFLRQFMYTKFIIVVDDDVNIRDWKEVIWAMTTRVDATRDTTLVDNTPIDYLDFASPVAGLGSKMGIDATNKWPGETNREWGRPIVMDAAVKRRVDEIWSTLGL</sequence>
<comment type="function">
    <text evidence="1">Catalyzes the decarboxylation of 3-octaprenyl-4-hydroxy benzoate to 2-octaprenylphenol, an intermediate step in ubiquinone biosynthesis.</text>
</comment>
<comment type="catalytic activity">
    <reaction evidence="1">
        <text>a 4-hydroxy-3-(all-trans-polyprenyl)benzoate + H(+) = a 2-(all-trans-polyprenyl)phenol + CO2</text>
        <dbReference type="Rhea" id="RHEA:41680"/>
        <dbReference type="Rhea" id="RHEA-COMP:9514"/>
        <dbReference type="Rhea" id="RHEA-COMP:9516"/>
        <dbReference type="ChEBI" id="CHEBI:1269"/>
        <dbReference type="ChEBI" id="CHEBI:15378"/>
        <dbReference type="ChEBI" id="CHEBI:16526"/>
        <dbReference type="ChEBI" id="CHEBI:78396"/>
        <dbReference type="EC" id="4.1.1.98"/>
    </reaction>
</comment>
<comment type="cofactor">
    <cofactor evidence="1">
        <name>prenylated FMN</name>
        <dbReference type="ChEBI" id="CHEBI:87746"/>
    </cofactor>
    <text evidence="1">Binds 1 prenylated FMN per subunit.</text>
</comment>
<comment type="cofactor">
    <cofactor evidence="1">
        <name>Mn(2+)</name>
        <dbReference type="ChEBI" id="CHEBI:29035"/>
    </cofactor>
</comment>
<comment type="pathway">
    <text evidence="1">Cofactor biosynthesis; ubiquinone biosynthesis.</text>
</comment>
<comment type="subunit">
    <text evidence="1">Homohexamer.</text>
</comment>
<comment type="subcellular location">
    <subcellularLocation>
        <location evidence="1">Cell membrane</location>
        <topology evidence="1">Peripheral membrane protein</topology>
    </subcellularLocation>
</comment>
<comment type="similarity">
    <text evidence="1">Belongs to the UbiD family.</text>
</comment>